<feature type="chain" id="PRO_0000248432" description="Uncharacterized protein YBL071C-B">
    <location>
        <begin position="1"/>
        <end position="32"/>
    </location>
</feature>
<protein>
    <recommendedName>
        <fullName>Uncharacterized protein YBL071C-B</fullName>
    </recommendedName>
</protein>
<accession>Q8TGU8</accession>
<accession>D6VPT0</accession>
<dbReference type="EMBL" id="Z35832">
    <property type="status" value="NOT_ANNOTATED_CDS"/>
    <property type="molecule type" value="Genomic_DNA"/>
</dbReference>
<dbReference type="EMBL" id="AF479887">
    <property type="protein sequence ID" value="AAL79200.1"/>
    <property type="molecule type" value="Genomic_DNA"/>
</dbReference>
<dbReference type="EMBL" id="BK006936">
    <property type="protein sequence ID" value="DAA07050.1"/>
    <property type="molecule type" value="Genomic_DNA"/>
</dbReference>
<dbReference type="RefSeq" id="NP_878044.1">
    <property type="nucleotide sequence ID" value="NM_001184584.1"/>
</dbReference>
<dbReference type="BioGRID" id="36982">
    <property type="interactions" value="42"/>
</dbReference>
<dbReference type="FunCoup" id="Q8TGU8">
    <property type="interactions" value="9"/>
</dbReference>
<dbReference type="STRING" id="4932.YBL071C-B"/>
<dbReference type="PaxDb" id="4932-YBL071C-B"/>
<dbReference type="EnsemblFungi" id="YBL071C-B_mRNA">
    <property type="protein sequence ID" value="YBL071C-B"/>
    <property type="gene ID" value="YBL071C-B"/>
</dbReference>
<dbReference type="GeneID" id="1466440"/>
<dbReference type="KEGG" id="sce:YBL071C-B"/>
<dbReference type="AGR" id="SGD:S000028597"/>
<dbReference type="SGD" id="S000028597">
    <property type="gene designation" value="YBL071C-B"/>
</dbReference>
<dbReference type="VEuPathDB" id="FungiDB:YBL071C-B"/>
<dbReference type="HOGENOM" id="CLU_3392523_0_0_1"/>
<dbReference type="InParanoid" id="Q8TGU8"/>
<dbReference type="BioCyc" id="YEAST:G3O-29261-MONOMER"/>
<dbReference type="BioGRID-ORCS" id="1466440">
    <property type="hits" value="0 hits in 10 CRISPR screens"/>
</dbReference>
<dbReference type="ChiTaRS" id="YBL071C-B">
    <property type="organism name" value="yeast"/>
</dbReference>
<dbReference type="PRO" id="PR:Q8TGU8"/>
<dbReference type="Proteomes" id="UP000002311">
    <property type="component" value="Chromosome II"/>
</dbReference>
<gene>
    <name type="ordered locus">YBL071C-B</name>
</gene>
<sequence>MELFHIRYLQAYLKVIGNYTCHLLFGTHKKTL</sequence>
<organism>
    <name type="scientific">Saccharomyces cerevisiae (strain ATCC 204508 / S288c)</name>
    <name type="common">Baker's yeast</name>
    <dbReference type="NCBI Taxonomy" id="559292"/>
    <lineage>
        <taxon>Eukaryota</taxon>
        <taxon>Fungi</taxon>
        <taxon>Dikarya</taxon>
        <taxon>Ascomycota</taxon>
        <taxon>Saccharomycotina</taxon>
        <taxon>Saccharomycetes</taxon>
        <taxon>Saccharomycetales</taxon>
        <taxon>Saccharomycetaceae</taxon>
        <taxon>Saccharomyces</taxon>
    </lineage>
</organism>
<keyword id="KW-1185">Reference proteome</keyword>
<proteinExistence type="predicted"/>
<reference key="1">
    <citation type="journal article" date="1994" name="EMBO J.">
        <title>Complete DNA sequence of yeast chromosome II.</title>
        <authorList>
            <person name="Feldmann H."/>
            <person name="Aigle M."/>
            <person name="Aljinovic G."/>
            <person name="Andre B."/>
            <person name="Baclet M.C."/>
            <person name="Barthe C."/>
            <person name="Baur A."/>
            <person name="Becam A.-M."/>
            <person name="Biteau N."/>
            <person name="Boles E."/>
            <person name="Brandt T."/>
            <person name="Brendel M."/>
            <person name="Brueckner M."/>
            <person name="Bussereau F."/>
            <person name="Christiansen C."/>
            <person name="Contreras R."/>
            <person name="Crouzet M."/>
            <person name="Cziepluch C."/>
            <person name="Demolis N."/>
            <person name="Delaveau T."/>
            <person name="Doignon F."/>
            <person name="Domdey H."/>
            <person name="Duesterhus S."/>
            <person name="Dubois E."/>
            <person name="Dujon B."/>
            <person name="El Bakkoury M."/>
            <person name="Entian K.-D."/>
            <person name="Feuermann M."/>
            <person name="Fiers W."/>
            <person name="Fobo G.M."/>
            <person name="Fritz C."/>
            <person name="Gassenhuber J."/>
            <person name="Glansdorff N."/>
            <person name="Goffeau A."/>
            <person name="Grivell L.A."/>
            <person name="de Haan M."/>
            <person name="Hein C."/>
            <person name="Herbert C.J."/>
            <person name="Hollenberg C.P."/>
            <person name="Holmstroem K."/>
            <person name="Jacq C."/>
            <person name="Jacquet M."/>
            <person name="Jauniaux J.-C."/>
            <person name="Jonniaux J.-L."/>
            <person name="Kallesoee T."/>
            <person name="Kiesau P."/>
            <person name="Kirchrath L."/>
            <person name="Koetter P."/>
            <person name="Korol S."/>
            <person name="Liebl S."/>
            <person name="Logghe M."/>
            <person name="Lohan A.J.E."/>
            <person name="Louis E.J."/>
            <person name="Li Z.Y."/>
            <person name="Maat M.J."/>
            <person name="Mallet L."/>
            <person name="Mannhaupt G."/>
            <person name="Messenguy F."/>
            <person name="Miosga T."/>
            <person name="Molemans F."/>
            <person name="Mueller S."/>
            <person name="Nasr F."/>
            <person name="Obermaier B."/>
            <person name="Perea J."/>
            <person name="Pierard A."/>
            <person name="Piravandi E."/>
            <person name="Pohl F.M."/>
            <person name="Pohl T.M."/>
            <person name="Potier S."/>
            <person name="Proft M."/>
            <person name="Purnelle B."/>
            <person name="Ramezani Rad M."/>
            <person name="Rieger M."/>
            <person name="Rose M."/>
            <person name="Schaaff-Gerstenschlaeger I."/>
            <person name="Scherens B."/>
            <person name="Schwarzlose C."/>
            <person name="Skala J."/>
            <person name="Slonimski P.P."/>
            <person name="Smits P.H.M."/>
            <person name="Souciet J.-L."/>
            <person name="Steensma H.Y."/>
            <person name="Stucka R."/>
            <person name="Urrestarazu L.A."/>
            <person name="van der Aart Q.J.M."/>
            <person name="Van Dyck L."/>
            <person name="Vassarotti A."/>
            <person name="Vetter I."/>
            <person name="Vierendeels F."/>
            <person name="Vissers S."/>
            <person name="Wagner G."/>
            <person name="de Wergifosse P."/>
            <person name="Wolfe K.H."/>
            <person name="Zagulski M."/>
            <person name="Zimmermann F.K."/>
            <person name="Mewes H.-W."/>
            <person name="Kleine K."/>
        </authorList>
    </citation>
    <scope>NUCLEOTIDE SEQUENCE [LARGE SCALE GENOMIC DNA]</scope>
    <source>
        <strain>ATCC 204508 / S288c</strain>
    </source>
</reference>
<reference key="2">
    <citation type="journal article" date="2014" name="G3 (Bethesda)">
        <title>The reference genome sequence of Saccharomyces cerevisiae: Then and now.</title>
        <authorList>
            <person name="Engel S.R."/>
            <person name="Dietrich F.S."/>
            <person name="Fisk D.G."/>
            <person name="Binkley G."/>
            <person name="Balakrishnan R."/>
            <person name="Costanzo M.C."/>
            <person name="Dwight S.S."/>
            <person name="Hitz B.C."/>
            <person name="Karra K."/>
            <person name="Nash R.S."/>
            <person name="Weng S."/>
            <person name="Wong E.D."/>
            <person name="Lloyd P."/>
            <person name="Skrzypek M.S."/>
            <person name="Miyasato S.R."/>
            <person name="Simison M."/>
            <person name="Cherry J.M."/>
        </authorList>
    </citation>
    <scope>GENOME REANNOTATION</scope>
    <source>
        <strain>ATCC 204508 / S288c</strain>
    </source>
</reference>
<reference key="3">
    <citation type="journal article" date="2002" name="Nat. Biotechnol.">
        <title>An integrated approach for finding overlooked genes in yeast.</title>
        <authorList>
            <person name="Kumar A."/>
            <person name="Harrison P.M."/>
            <person name="Cheung K.-H."/>
            <person name="Lan N."/>
            <person name="Echols N."/>
            <person name="Bertone P."/>
            <person name="Miller P."/>
            <person name="Gerstein M.B."/>
            <person name="Snyder M."/>
        </authorList>
    </citation>
    <scope>NUCLEOTIDE SEQUENCE [GENOMIC DNA]</scope>
</reference>
<name>YB071_YEAST</name>